<name>CTTB2_PLEMO</name>
<protein>
    <recommendedName>
        <fullName>Cortactin-binding protein 2</fullName>
        <shortName>CortBP2</shortName>
    </recommendedName>
</protein>
<organism>
    <name type="scientific">Plecturocebus moloch</name>
    <name type="common">Dusky titi monkey</name>
    <name type="synonym">Callicebus moloch</name>
    <dbReference type="NCBI Taxonomy" id="9523"/>
    <lineage>
        <taxon>Eukaryota</taxon>
        <taxon>Metazoa</taxon>
        <taxon>Chordata</taxon>
        <taxon>Craniata</taxon>
        <taxon>Vertebrata</taxon>
        <taxon>Euteleostomi</taxon>
        <taxon>Mammalia</taxon>
        <taxon>Eutheria</taxon>
        <taxon>Euarchontoglires</taxon>
        <taxon>Primates</taxon>
        <taxon>Haplorrhini</taxon>
        <taxon>Platyrrhini</taxon>
        <taxon>Pitheciidae</taxon>
        <taxon>Callicebinae</taxon>
        <taxon>Plecturocebus</taxon>
    </lineage>
</organism>
<evidence type="ECO:0000250" key="1">
    <source>
        <dbReference type="UniProtKB" id="B9EJA2"/>
    </source>
</evidence>
<evidence type="ECO:0000250" key="2">
    <source>
        <dbReference type="UniProtKB" id="Q2IBD4"/>
    </source>
</evidence>
<evidence type="ECO:0000250" key="3">
    <source>
        <dbReference type="UniProtKB" id="Q8WZ74"/>
    </source>
</evidence>
<evidence type="ECO:0000255" key="4"/>
<evidence type="ECO:0000256" key="5">
    <source>
        <dbReference type="SAM" id="MobiDB-lite"/>
    </source>
</evidence>
<sequence length="1663" mass="180960">MATDGASCEPDLSRAPEDAAGATAEAAKKEFDVDTLSKSELRMLLSVMEGELEARDLVIEALRARRKEVFIQERYGRFNLNDPFLALQRDYEAGAGDKEKKPVCTNPLSILEAVMAHCRKMQERMSAQLAAAESRQKKLEMEKLQLQALEQEHKKLAARLEEERGKNKQVVLMLVKECKQLSGRVIEEAQKLKDVMAKLEEEKKKTNELEEELSAEKQRSTEMEAQMEKQLSEFDTEREQLRAKLNREEAHTTDLKEEIDKMKKMIEQLKKGGDSKPSLSLPRKTKDRRLVSISVGTEGTVTRSVACQTDLVTESADHVKKLPLTMPVKPSTGSPLASANAKGSVCTSAAMARPSIDRQPSHGDLIGVSVPAFPPSSANRIEENGPSTDSTPDPTSSTPLLSSNAAPPTAQTPGITPQNSQAPPMHSLHSPCANASLHPGLNPRIQAARFRFQGNANDPDQNGNTTQSPPSRDVSPTSRDNLVAKQLARNTVTQALSRFTGPQAGAPPRPGAPPTGDVGTHPSVGRTSVKTHGVARVDRGNPPPIPPKKPGLSQTPSPPHPQLKVIIDSSRASNTGAKGDNKTVASPPSSLPQGNRVINEENLPKSSSPQLPPKPSIDLTVAPAGCAVSALATSQVGAWPAATPGLNQPACSDSSLVIPTTIAFCSSINPVSASSCRPGASDSLLVTASGWSPSLTPLLMSGGPAPLAGRPTLLQQAAAQGNVTLLSMLLNEEGLDINYSCEDGHSALYSAAKNGHTDCVRLLLSAEAQVNAADTNGFTPLCAAAAQGHFECVELLIAYDANINHAAGGGQTPLYLACKNGNKECIKLLLEAGTDRCVKTTDGWTPVHAAVDTGNVDSLKLLMYHRVPAHGNSFSEEESESGVFDLDGEEESPEGKSKPVVTADLINHANREGWTAAHIAAAKGFKNCLEILCRHGGLEPERRDKCNRTVHDVATDDCKHLLENLNALKIPLRISVGEIEPSDYGSDDFECENTICSLNIRKQTSWDDFSKAVNQALTNHFQAISSDGWWSLEDVTCNNTTDSNIGLSARSIRSITLGNVPWSVGESFAQSPWDFMMKNKAEHITVLLSGPQEGCLSSVTYASMIPLQMMQNYLRLVEQYHNVIFHGPEGSLQDYIVHQLALCLKHRQMAAGFSCEIVRAEVDSGFSKKQLLDLFISNACLIPVKQSPVKKKIIIILENLEKSSLSELLRDFLAPLENRSTESPCTFQKGNGMSECYYFHENCFLMGTIAKACLQGSDLLVQQHFRWVQLRWDGEPMQGLLQRFLRRKVVNKFRGQVPPPCDPVCKIVDWALSVWRQLNSCLARLGTPEALLGPKYFLSCPVVPGHAQVTVKWMSKLWNGVITPRVQEAILSRASVKRQPGFGQTTAKRHPSQGQQAVVKAALSILLNKAVLHGCPLPRAELEQHTADFKGGSFPLSIVSSFNSCSKKKGESGAWRKVNTSPRRKSGRFSLPTWNKPDLSTEGIKNKTLSQLNCNRNASLSKQKSVENDVSLTLNLDQRLSLGSDDEADLVKELQSMCSSKSESDISKIADSRDDLRMFNSPGNNPVFSATVNNLRMPVSQKEVCPLSSHQTTECSNSKSKTELGVSRVKSFLPVPRSKVTQCSQNTKSSSSSSNTRQIEINNNSKEENWNLHKNEHLEKANK</sequence>
<keyword id="KW-0040">ANK repeat</keyword>
<keyword id="KW-0966">Cell projection</keyword>
<keyword id="KW-0175">Coiled coil</keyword>
<keyword id="KW-0963">Cytoplasm</keyword>
<keyword id="KW-0488">Methylation</keyword>
<keyword id="KW-0597">Phosphoprotein</keyword>
<keyword id="KW-0677">Repeat</keyword>
<keyword id="KW-0770">Synapse</keyword>
<reference key="1">
    <citation type="submission" date="2005-11" db="EMBL/GenBank/DDBJ databases">
        <title>NISC comparative sequencing initiative.</title>
        <authorList>
            <person name="Antonellis A."/>
            <person name="Ayele K."/>
            <person name="Benjamin B."/>
            <person name="Blakesley R.W."/>
            <person name="Boakye A."/>
            <person name="Bouffard G.G."/>
            <person name="Brinkley C."/>
            <person name="Brooks S."/>
            <person name="Chu G."/>
            <person name="Coleman H."/>
            <person name="Engle J."/>
            <person name="Gestole M."/>
            <person name="Greene A."/>
            <person name="Guan X."/>
            <person name="Gupta J."/>
            <person name="Haghighi P."/>
            <person name="Han J."/>
            <person name="Hansen N."/>
            <person name="Ho S.-L."/>
            <person name="Hu P."/>
            <person name="Hunter G."/>
            <person name="Hurle B."/>
            <person name="Idol J.R."/>
            <person name="Kwong P."/>
            <person name="Laric P."/>
            <person name="Larson S."/>
            <person name="Lee-Lin S.-Q."/>
            <person name="Legaspi R."/>
            <person name="Madden M."/>
            <person name="Maduro Q.L."/>
            <person name="Maduro V.B."/>
            <person name="Margulies E.H."/>
            <person name="Masiello C."/>
            <person name="Maskeri B."/>
            <person name="McDowell J."/>
            <person name="Mojidi H.A."/>
            <person name="Mullikin J.C."/>
            <person name="Oestreicher J.S."/>
            <person name="Park M."/>
            <person name="Portnoy M.E."/>
            <person name="Prasad A."/>
            <person name="Puri O."/>
            <person name="Reddix-Dugue N."/>
            <person name="Schandler K."/>
            <person name="Schueler M.G."/>
            <person name="Sison C."/>
            <person name="Stantripop S."/>
            <person name="Stephen E."/>
            <person name="Taye A."/>
            <person name="Thomas J.W."/>
            <person name="Thomas P.J."/>
            <person name="Tsipouri V."/>
            <person name="Ung L."/>
            <person name="Vogt J.L."/>
            <person name="Wetherby K.D."/>
            <person name="Young A."/>
            <person name="Green E.D."/>
        </authorList>
    </citation>
    <scope>NUCLEOTIDE SEQUENCE [LARGE SCALE GENOMIC DNA]</scope>
</reference>
<gene>
    <name type="primary">CTTNBP2</name>
    <name type="synonym">CORTBP2</name>
</gene>
<dbReference type="EMBL" id="DP000019">
    <property type="protein sequence ID" value="ABB89796.1"/>
    <property type="molecule type" value="Genomic_DNA"/>
</dbReference>
<dbReference type="SMR" id="Q2QLB3"/>
<dbReference type="GO" id="GO:0015629">
    <property type="term" value="C:actin cytoskeleton"/>
    <property type="evidence" value="ECO:0007669"/>
    <property type="project" value="TreeGrafter"/>
</dbReference>
<dbReference type="GO" id="GO:0005938">
    <property type="term" value="C:cell cortex"/>
    <property type="evidence" value="ECO:0007669"/>
    <property type="project" value="UniProtKB-SubCell"/>
</dbReference>
<dbReference type="GO" id="GO:0043197">
    <property type="term" value="C:dendritic spine"/>
    <property type="evidence" value="ECO:0000250"/>
    <property type="project" value="UniProtKB"/>
</dbReference>
<dbReference type="GO" id="GO:0090443">
    <property type="term" value="C:FAR/SIN/STRIPAK complex"/>
    <property type="evidence" value="ECO:0000250"/>
    <property type="project" value="UniProtKB"/>
</dbReference>
<dbReference type="GO" id="GO:0051721">
    <property type="term" value="F:protein phosphatase 2A binding"/>
    <property type="evidence" value="ECO:0007669"/>
    <property type="project" value="TreeGrafter"/>
</dbReference>
<dbReference type="Gene3D" id="1.25.40.20">
    <property type="entry name" value="Ankyrin repeat-containing domain"/>
    <property type="match status" value="1"/>
</dbReference>
<dbReference type="InterPro" id="IPR002110">
    <property type="entry name" value="Ankyrin_rpt"/>
</dbReference>
<dbReference type="InterPro" id="IPR036770">
    <property type="entry name" value="Ankyrin_rpt-contain_sf"/>
</dbReference>
<dbReference type="InterPro" id="IPR050719">
    <property type="entry name" value="Cortactin-Actin_Reg"/>
</dbReference>
<dbReference type="InterPro" id="IPR019131">
    <property type="entry name" value="Cortactin-binding_p2_N"/>
</dbReference>
<dbReference type="PANTHER" id="PTHR23166:SF9">
    <property type="entry name" value="CTTNBP2 N-TERMINAL-LIKE PROTEIN"/>
    <property type="match status" value="1"/>
</dbReference>
<dbReference type="PANTHER" id="PTHR23166">
    <property type="entry name" value="FILAMIN/GPBP-INTERACTING PROTEIN"/>
    <property type="match status" value="1"/>
</dbReference>
<dbReference type="Pfam" id="PF25408">
    <property type="entry name" value="AAA_lid_NAV1"/>
    <property type="match status" value="1"/>
</dbReference>
<dbReference type="Pfam" id="PF00023">
    <property type="entry name" value="Ank"/>
    <property type="match status" value="2"/>
</dbReference>
<dbReference type="Pfam" id="PF12796">
    <property type="entry name" value="Ank_2"/>
    <property type="match status" value="1"/>
</dbReference>
<dbReference type="Pfam" id="PF09727">
    <property type="entry name" value="CortBP2"/>
    <property type="match status" value="1"/>
</dbReference>
<dbReference type="SMART" id="SM00248">
    <property type="entry name" value="ANK"/>
    <property type="match status" value="6"/>
</dbReference>
<dbReference type="SUPFAM" id="SSF48403">
    <property type="entry name" value="Ankyrin repeat"/>
    <property type="match status" value="1"/>
</dbReference>
<dbReference type="PROSITE" id="PS50297">
    <property type="entry name" value="ANK_REP_REGION"/>
    <property type="match status" value="1"/>
</dbReference>
<dbReference type="PROSITE" id="PS50088">
    <property type="entry name" value="ANK_REPEAT"/>
    <property type="match status" value="4"/>
</dbReference>
<feature type="chain" id="PRO_0000227000" description="Cortactin-binding protein 2">
    <location>
        <begin position="1"/>
        <end position="1663"/>
    </location>
</feature>
<feature type="repeat" description="ANK 1">
    <location>
        <begin position="709"/>
        <end position="739"/>
    </location>
</feature>
<feature type="repeat" description="ANK 2">
    <location>
        <begin position="743"/>
        <end position="772"/>
    </location>
</feature>
<feature type="repeat" description="ANK 3">
    <location>
        <begin position="776"/>
        <end position="805"/>
    </location>
</feature>
<feature type="repeat" description="ANK 4">
    <location>
        <begin position="809"/>
        <end position="838"/>
    </location>
</feature>
<feature type="repeat" description="ANK 5">
    <location>
        <begin position="842"/>
        <end position="871"/>
    </location>
</feature>
<feature type="repeat" description="ANK 6">
    <location>
        <begin position="912"/>
        <end position="942"/>
    </location>
</feature>
<feature type="region of interest" description="Disordered" evidence="5">
    <location>
        <begin position="1"/>
        <end position="26"/>
    </location>
</feature>
<feature type="region of interest" description="Disordered" evidence="5">
    <location>
        <begin position="355"/>
        <end position="440"/>
    </location>
</feature>
<feature type="region of interest" description="Disordered" evidence="5">
    <location>
        <begin position="454"/>
        <end position="478"/>
    </location>
</feature>
<feature type="region of interest" description="Disordered" evidence="5">
    <location>
        <begin position="499"/>
        <end position="614"/>
    </location>
</feature>
<feature type="region of interest" description="Disordered" evidence="5">
    <location>
        <begin position="872"/>
        <end position="897"/>
    </location>
</feature>
<feature type="region of interest" description="Disordered" evidence="5">
    <location>
        <begin position="1446"/>
        <end position="1482"/>
    </location>
</feature>
<feature type="region of interest" description="Disordered" evidence="5">
    <location>
        <begin position="1617"/>
        <end position="1663"/>
    </location>
</feature>
<feature type="coiled-coil region" evidence="4">
    <location>
        <begin position="119"/>
        <end position="275"/>
    </location>
</feature>
<feature type="compositionally biased region" description="Low complexity" evidence="5">
    <location>
        <begin position="386"/>
        <end position="403"/>
    </location>
</feature>
<feature type="compositionally biased region" description="Polar residues" evidence="5">
    <location>
        <begin position="404"/>
        <end position="422"/>
    </location>
</feature>
<feature type="compositionally biased region" description="Polar residues" evidence="5">
    <location>
        <begin position="583"/>
        <end position="593"/>
    </location>
</feature>
<feature type="compositionally biased region" description="Acidic residues" evidence="5">
    <location>
        <begin position="875"/>
        <end position="892"/>
    </location>
</feature>
<feature type="compositionally biased region" description="Polar residues" evidence="5">
    <location>
        <begin position="1619"/>
        <end position="1628"/>
    </location>
</feature>
<feature type="compositionally biased region" description="Polar residues" evidence="5">
    <location>
        <begin position="1635"/>
        <end position="1644"/>
    </location>
</feature>
<feature type="compositionally biased region" description="Basic and acidic residues" evidence="5">
    <location>
        <begin position="1645"/>
        <end position="1663"/>
    </location>
</feature>
<feature type="modified residue" description="Asymmetric dimethylarginine" evidence="1">
    <location>
        <position position="498"/>
    </location>
</feature>
<feature type="modified residue" description="Phosphoserine" evidence="3">
    <location>
        <position position="1524"/>
    </location>
</feature>
<accession>Q2QLB3</accession>
<proteinExistence type="inferred from homology"/>
<comment type="function">
    <text evidence="2">Regulates the dendritic spine distribution of CTTN/cortactin in hippocampal neurons, and thus controls dendritic spinogenesis and dendritic spine maintenance. Associates with the striatin-interacting phosphatase and kinase (STRIPAK) core complex to regulate dendritic spine distribution of the STRIPAK complex in hippocampal neurons.</text>
</comment>
<comment type="subunit">
    <text evidence="2">Interacts with CTTN/cortactin SH3 domain. Interacts with STRN, STRN4/zinedin and MOB4/phocein; this interactions mediate the association with the STRIPAK core complex and may regulate dendritic spine distribution of the STRIPAK complex in hippocampal neurons. Activation of glutamate receptors weakens the interaction with STRN and STRN4.</text>
</comment>
<comment type="subcellular location">
    <subcellularLocation>
        <location evidence="1">Cytoplasm</location>
        <location evidence="1">Cell cortex</location>
    </subcellularLocation>
    <subcellularLocation>
        <location evidence="2">Cell projection</location>
        <location evidence="2">Dendritic spine</location>
    </subcellularLocation>
    <text evidence="2">Remains associated with dendritic spines even after glutamate stimulation.</text>
</comment>